<reference key="1">
    <citation type="submission" date="2008-01" db="EMBL/GenBank/DDBJ databases">
        <title>Complete sequence of Thermoanaerobacter pseudethanolicus 39E.</title>
        <authorList>
            <person name="Copeland A."/>
            <person name="Lucas S."/>
            <person name="Lapidus A."/>
            <person name="Barry K."/>
            <person name="Glavina del Rio T."/>
            <person name="Dalin E."/>
            <person name="Tice H."/>
            <person name="Pitluck S."/>
            <person name="Bruce D."/>
            <person name="Goodwin L."/>
            <person name="Saunders E."/>
            <person name="Brettin T."/>
            <person name="Detter J.C."/>
            <person name="Han C."/>
            <person name="Schmutz J."/>
            <person name="Larimer F."/>
            <person name="Land M."/>
            <person name="Hauser L."/>
            <person name="Kyrpides N."/>
            <person name="Lykidis A."/>
            <person name="Hemme C."/>
            <person name="Fields M.W."/>
            <person name="He Z."/>
            <person name="Zhou J."/>
            <person name="Richardson P."/>
        </authorList>
    </citation>
    <scope>NUCLEOTIDE SEQUENCE [LARGE SCALE GENOMIC DNA]</scope>
    <source>
        <strain>ATCC 33223 / DSM 2355 / 39E</strain>
    </source>
</reference>
<organism>
    <name type="scientific">Thermoanaerobacter pseudethanolicus (strain ATCC 33223 / 39E)</name>
    <name type="common">Clostridium thermohydrosulfuricum</name>
    <dbReference type="NCBI Taxonomy" id="340099"/>
    <lineage>
        <taxon>Bacteria</taxon>
        <taxon>Bacillati</taxon>
        <taxon>Bacillota</taxon>
        <taxon>Clostridia</taxon>
        <taxon>Thermoanaerobacterales</taxon>
        <taxon>Thermoanaerobacteraceae</taxon>
        <taxon>Thermoanaerobacter</taxon>
    </lineage>
</organism>
<comment type="function">
    <text evidence="1">RNaseP catalyzes the removal of the 5'-leader sequence from pre-tRNA to produce the mature 5'-terminus. It can also cleave other RNA substrates such as 4.5S RNA. The protein component plays an auxiliary but essential role in vivo by binding to the 5'-leader sequence and broadening the substrate specificity of the ribozyme.</text>
</comment>
<comment type="catalytic activity">
    <reaction evidence="1">
        <text>Endonucleolytic cleavage of RNA, removing 5'-extranucleotides from tRNA precursor.</text>
        <dbReference type="EC" id="3.1.26.5"/>
    </reaction>
</comment>
<comment type="subunit">
    <text evidence="1">Consists of a catalytic RNA component (M1 or rnpB) and a protein subunit.</text>
</comment>
<comment type="similarity">
    <text evidence="1">Belongs to the RnpA family.</text>
</comment>
<accession>B0K8I3</accession>
<protein>
    <recommendedName>
        <fullName evidence="1">Ribonuclease P protein component</fullName>
        <shortName evidence="1">RNase P protein</shortName>
        <shortName evidence="1">RNaseP protein</shortName>
        <ecNumber evidence="1">3.1.26.5</ecNumber>
    </recommendedName>
    <alternativeName>
        <fullName evidence="1">Protein C5</fullName>
    </alternativeName>
</protein>
<sequence length="116" mass="13625">MRRKIVKIKKSYEFKKVYSNGKSVANQFVVMYYMENNLGFNRVGYSVSKKIGKSVVRNRVRRLLHESFRLLDIEIKTGFDIIFVARGKIVEADFHTLKNSMRKLIMKTPLYAGNEK</sequence>
<keyword id="KW-0255">Endonuclease</keyword>
<keyword id="KW-0378">Hydrolase</keyword>
<keyword id="KW-0540">Nuclease</keyword>
<keyword id="KW-1185">Reference proteome</keyword>
<keyword id="KW-0694">RNA-binding</keyword>
<keyword id="KW-0819">tRNA processing</keyword>
<gene>
    <name evidence="1" type="primary">rnpA</name>
    <name type="ordered locus">Teth39_2294</name>
</gene>
<evidence type="ECO:0000255" key="1">
    <source>
        <dbReference type="HAMAP-Rule" id="MF_00227"/>
    </source>
</evidence>
<dbReference type="EC" id="3.1.26.5" evidence="1"/>
<dbReference type="EMBL" id="CP000924">
    <property type="protein sequence ID" value="ABY95915.1"/>
    <property type="molecule type" value="Genomic_DNA"/>
</dbReference>
<dbReference type="RefSeq" id="WP_009052053.1">
    <property type="nucleotide sequence ID" value="NC_010321.1"/>
</dbReference>
<dbReference type="SMR" id="B0K8I3"/>
<dbReference type="STRING" id="340099.Teth39_2294"/>
<dbReference type="KEGG" id="tpd:Teth39_2294"/>
<dbReference type="eggNOG" id="COG0594">
    <property type="taxonomic scope" value="Bacteria"/>
</dbReference>
<dbReference type="HOGENOM" id="CLU_117179_9_3_9"/>
<dbReference type="Proteomes" id="UP000002156">
    <property type="component" value="Chromosome"/>
</dbReference>
<dbReference type="GO" id="GO:0030677">
    <property type="term" value="C:ribonuclease P complex"/>
    <property type="evidence" value="ECO:0007669"/>
    <property type="project" value="TreeGrafter"/>
</dbReference>
<dbReference type="GO" id="GO:0042781">
    <property type="term" value="F:3'-tRNA processing endoribonuclease activity"/>
    <property type="evidence" value="ECO:0007669"/>
    <property type="project" value="TreeGrafter"/>
</dbReference>
<dbReference type="GO" id="GO:0004526">
    <property type="term" value="F:ribonuclease P activity"/>
    <property type="evidence" value="ECO:0007669"/>
    <property type="project" value="UniProtKB-UniRule"/>
</dbReference>
<dbReference type="GO" id="GO:0000049">
    <property type="term" value="F:tRNA binding"/>
    <property type="evidence" value="ECO:0007669"/>
    <property type="project" value="UniProtKB-UniRule"/>
</dbReference>
<dbReference type="GO" id="GO:0001682">
    <property type="term" value="P:tRNA 5'-leader removal"/>
    <property type="evidence" value="ECO:0007669"/>
    <property type="project" value="UniProtKB-UniRule"/>
</dbReference>
<dbReference type="Gene3D" id="3.30.230.10">
    <property type="match status" value="1"/>
</dbReference>
<dbReference type="HAMAP" id="MF_00227">
    <property type="entry name" value="RNase_P"/>
    <property type="match status" value="1"/>
</dbReference>
<dbReference type="InterPro" id="IPR020568">
    <property type="entry name" value="Ribosomal_Su5_D2-typ_SF"/>
</dbReference>
<dbReference type="InterPro" id="IPR014721">
    <property type="entry name" value="Ribsml_uS5_D2-typ_fold_subgr"/>
</dbReference>
<dbReference type="InterPro" id="IPR000100">
    <property type="entry name" value="RNase_P"/>
</dbReference>
<dbReference type="NCBIfam" id="TIGR00188">
    <property type="entry name" value="rnpA"/>
    <property type="match status" value="1"/>
</dbReference>
<dbReference type="PANTHER" id="PTHR33992">
    <property type="entry name" value="RIBONUCLEASE P PROTEIN COMPONENT"/>
    <property type="match status" value="1"/>
</dbReference>
<dbReference type="PANTHER" id="PTHR33992:SF1">
    <property type="entry name" value="RIBONUCLEASE P PROTEIN COMPONENT"/>
    <property type="match status" value="1"/>
</dbReference>
<dbReference type="Pfam" id="PF00825">
    <property type="entry name" value="Ribonuclease_P"/>
    <property type="match status" value="1"/>
</dbReference>
<dbReference type="SUPFAM" id="SSF54211">
    <property type="entry name" value="Ribosomal protein S5 domain 2-like"/>
    <property type="match status" value="1"/>
</dbReference>
<feature type="chain" id="PRO_1000100403" description="Ribonuclease P protein component">
    <location>
        <begin position="1"/>
        <end position="116"/>
    </location>
</feature>
<name>RNPA_THEP3</name>
<proteinExistence type="inferred from homology"/>